<sequence>MASSNLIKQLQERGLVAQVTDEDALAERLAQGPIALYCGFDPTADSLHLGHLVPLLCLKRFQQAGHKPVALVGGATGLIGDPSFKAAERKLNTEETVQEWVAKIRKQVAPFLDFDCGENSAIAANNYDWFGSMNVLTFLRDIGKHFSVNQMINKEAVKQRLNRDDQGISFTEFSYNLLQGYDFACLNKLHGVALQIGGSDQWGNITSGIDLTRRLHQNQVFGLTVPLITKADGTKFGKTEGGAVWLDPKKTSPYKFYQFWINTADADVYRFLKFFTFMDIEEINALEEEDKNSGKAPRAQYVLAEQVTRLVHGEEGLVAAKRITECLFSGSLSALSEADFEQLAQDGVPMVEMEKGADLMQALVDAELQPSRGQARKTIASNAVTINGEKQSDPEYIFNDEDRLFGRYTLLRRGKKNYCLICWK</sequence>
<proteinExistence type="inferred from homology"/>
<organism>
    <name type="scientific">Salmonella agona (strain SL483)</name>
    <dbReference type="NCBI Taxonomy" id="454166"/>
    <lineage>
        <taxon>Bacteria</taxon>
        <taxon>Pseudomonadati</taxon>
        <taxon>Pseudomonadota</taxon>
        <taxon>Gammaproteobacteria</taxon>
        <taxon>Enterobacterales</taxon>
        <taxon>Enterobacteriaceae</taxon>
        <taxon>Salmonella</taxon>
    </lineage>
</organism>
<evidence type="ECO:0000255" key="1">
    <source>
        <dbReference type="HAMAP-Rule" id="MF_02006"/>
    </source>
</evidence>
<reference key="1">
    <citation type="journal article" date="2011" name="J. Bacteriol.">
        <title>Comparative genomics of 28 Salmonella enterica isolates: evidence for CRISPR-mediated adaptive sublineage evolution.</title>
        <authorList>
            <person name="Fricke W.F."/>
            <person name="Mammel M.K."/>
            <person name="McDermott P.F."/>
            <person name="Tartera C."/>
            <person name="White D.G."/>
            <person name="Leclerc J.E."/>
            <person name="Ravel J."/>
            <person name="Cebula T.A."/>
        </authorList>
    </citation>
    <scope>NUCLEOTIDE SEQUENCE [LARGE SCALE GENOMIC DNA]</scope>
    <source>
        <strain>SL483</strain>
    </source>
</reference>
<feature type="chain" id="PRO_1000189321" description="Tyrosine--tRNA ligase">
    <location>
        <begin position="1"/>
        <end position="424"/>
    </location>
</feature>
<feature type="domain" description="S4 RNA-binding" evidence="1">
    <location>
        <begin position="357"/>
        <end position="414"/>
    </location>
</feature>
<feature type="short sequence motif" description="'HIGH' region">
    <location>
        <begin position="42"/>
        <end position="51"/>
    </location>
</feature>
<feature type="short sequence motif" description="'KMSKS' region">
    <location>
        <begin position="235"/>
        <end position="239"/>
    </location>
</feature>
<feature type="binding site" evidence="1">
    <location>
        <position position="37"/>
    </location>
    <ligand>
        <name>L-tyrosine</name>
        <dbReference type="ChEBI" id="CHEBI:58315"/>
    </ligand>
</feature>
<feature type="binding site" evidence="1">
    <location>
        <position position="175"/>
    </location>
    <ligand>
        <name>L-tyrosine</name>
        <dbReference type="ChEBI" id="CHEBI:58315"/>
    </ligand>
</feature>
<feature type="binding site" evidence="1">
    <location>
        <position position="179"/>
    </location>
    <ligand>
        <name>L-tyrosine</name>
        <dbReference type="ChEBI" id="CHEBI:58315"/>
    </ligand>
</feature>
<feature type="binding site" evidence="1">
    <location>
        <position position="238"/>
    </location>
    <ligand>
        <name>ATP</name>
        <dbReference type="ChEBI" id="CHEBI:30616"/>
    </ligand>
</feature>
<keyword id="KW-0030">Aminoacyl-tRNA synthetase</keyword>
<keyword id="KW-0067">ATP-binding</keyword>
<keyword id="KW-0963">Cytoplasm</keyword>
<keyword id="KW-0436">Ligase</keyword>
<keyword id="KW-0547">Nucleotide-binding</keyword>
<keyword id="KW-0648">Protein biosynthesis</keyword>
<keyword id="KW-0694">RNA-binding</keyword>
<dbReference type="EC" id="6.1.1.1" evidence="1"/>
<dbReference type="EMBL" id="CP001138">
    <property type="protein sequence ID" value="ACH49793.1"/>
    <property type="molecule type" value="Genomic_DNA"/>
</dbReference>
<dbReference type="RefSeq" id="WP_000168626.1">
    <property type="nucleotide sequence ID" value="NC_011149.1"/>
</dbReference>
<dbReference type="SMR" id="B5F6J8"/>
<dbReference type="KEGG" id="sea:SeAg_B1725"/>
<dbReference type="HOGENOM" id="CLU_024003_0_3_6"/>
<dbReference type="Proteomes" id="UP000008819">
    <property type="component" value="Chromosome"/>
</dbReference>
<dbReference type="GO" id="GO:0005829">
    <property type="term" value="C:cytosol"/>
    <property type="evidence" value="ECO:0007669"/>
    <property type="project" value="TreeGrafter"/>
</dbReference>
<dbReference type="GO" id="GO:0005524">
    <property type="term" value="F:ATP binding"/>
    <property type="evidence" value="ECO:0007669"/>
    <property type="project" value="UniProtKB-UniRule"/>
</dbReference>
<dbReference type="GO" id="GO:0003723">
    <property type="term" value="F:RNA binding"/>
    <property type="evidence" value="ECO:0007669"/>
    <property type="project" value="UniProtKB-KW"/>
</dbReference>
<dbReference type="GO" id="GO:0004831">
    <property type="term" value="F:tyrosine-tRNA ligase activity"/>
    <property type="evidence" value="ECO:0007669"/>
    <property type="project" value="UniProtKB-UniRule"/>
</dbReference>
<dbReference type="GO" id="GO:0006437">
    <property type="term" value="P:tyrosyl-tRNA aminoacylation"/>
    <property type="evidence" value="ECO:0007669"/>
    <property type="project" value="UniProtKB-UniRule"/>
</dbReference>
<dbReference type="CDD" id="cd00165">
    <property type="entry name" value="S4"/>
    <property type="match status" value="1"/>
</dbReference>
<dbReference type="CDD" id="cd00805">
    <property type="entry name" value="TyrRS_core"/>
    <property type="match status" value="1"/>
</dbReference>
<dbReference type="FunFam" id="1.10.240.10:FF:000001">
    <property type="entry name" value="Tyrosine--tRNA ligase"/>
    <property type="match status" value="1"/>
</dbReference>
<dbReference type="FunFam" id="3.10.290.10:FF:000007">
    <property type="entry name" value="Tyrosine--tRNA ligase"/>
    <property type="match status" value="1"/>
</dbReference>
<dbReference type="FunFam" id="3.40.50.620:FF:000008">
    <property type="entry name" value="Tyrosine--tRNA ligase"/>
    <property type="match status" value="1"/>
</dbReference>
<dbReference type="Gene3D" id="3.40.50.620">
    <property type="entry name" value="HUPs"/>
    <property type="match status" value="1"/>
</dbReference>
<dbReference type="Gene3D" id="3.10.290.10">
    <property type="entry name" value="RNA-binding S4 domain"/>
    <property type="match status" value="1"/>
</dbReference>
<dbReference type="Gene3D" id="1.10.240.10">
    <property type="entry name" value="Tyrosyl-Transfer RNA Synthetase"/>
    <property type="match status" value="1"/>
</dbReference>
<dbReference type="HAMAP" id="MF_02006">
    <property type="entry name" value="Tyr_tRNA_synth_type1"/>
    <property type="match status" value="1"/>
</dbReference>
<dbReference type="InterPro" id="IPR001412">
    <property type="entry name" value="aa-tRNA-synth_I_CS"/>
</dbReference>
<dbReference type="InterPro" id="IPR002305">
    <property type="entry name" value="aa-tRNA-synth_Ic"/>
</dbReference>
<dbReference type="InterPro" id="IPR014729">
    <property type="entry name" value="Rossmann-like_a/b/a_fold"/>
</dbReference>
<dbReference type="InterPro" id="IPR002942">
    <property type="entry name" value="S4_RNA-bd"/>
</dbReference>
<dbReference type="InterPro" id="IPR036986">
    <property type="entry name" value="S4_RNA-bd_sf"/>
</dbReference>
<dbReference type="InterPro" id="IPR054608">
    <property type="entry name" value="SYY-like_C"/>
</dbReference>
<dbReference type="InterPro" id="IPR002307">
    <property type="entry name" value="Tyr-tRNA-ligase"/>
</dbReference>
<dbReference type="InterPro" id="IPR024088">
    <property type="entry name" value="Tyr-tRNA-ligase_bac-type"/>
</dbReference>
<dbReference type="InterPro" id="IPR024107">
    <property type="entry name" value="Tyr-tRNA-ligase_bac_1"/>
</dbReference>
<dbReference type="NCBIfam" id="TIGR00234">
    <property type="entry name" value="tyrS"/>
    <property type="match status" value="1"/>
</dbReference>
<dbReference type="PANTHER" id="PTHR11766:SF0">
    <property type="entry name" value="TYROSINE--TRNA LIGASE, MITOCHONDRIAL"/>
    <property type="match status" value="1"/>
</dbReference>
<dbReference type="PANTHER" id="PTHR11766">
    <property type="entry name" value="TYROSYL-TRNA SYNTHETASE"/>
    <property type="match status" value="1"/>
</dbReference>
<dbReference type="Pfam" id="PF22421">
    <property type="entry name" value="SYY_C-terminal"/>
    <property type="match status" value="1"/>
</dbReference>
<dbReference type="Pfam" id="PF00579">
    <property type="entry name" value="tRNA-synt_1b"/>
    <property type="match status" value="1"/>
</dbReference>
<dbReference type="PRINTS" id="PR01040">
    <property type="entry name" value="TRNASYNTHTYR"/>
</dbReference>
<dbReference type="SMART" id="SM00363">
    <property type="entry name" value="S4"/>
    <property type="match status" value="1"/>
</dbReference>
<dbReference type="SUPFAM" id="SSF55174">
    <property type="entry name" value="Alpha-L RNA-binding motif"/>
    <property type="match status" value="1"/>
</dbReference>
<dbReference type="SUPFAM" id="SSF52374">
    <property type="entry name" value="Nucleotidylyl transferase"/>
    <property type="match status" value="1"/>
</dbReference>
<dbReference type="PROSITE" id="PS00178">
    <property type="entry name" value="AA_TRNA_LIGASE_I"/>
    <property type="match status" value="1"/>
</dbReference>
<dbReference type="PROSITE" id="PS50889">
    <property type="entry name" value="S4"/>
    <property type="match status" value="1"/>
</dbReference>
<comment type="function">
    <text evidence="1">Catalyzes the attachment of tyrosine to tRNA(Tyr) in a two-step reaction: tyrosine is first activated by ATP to form Tyr-AMP and then transferred to the acceptor end of tRNA(Tyr).</text>
</comment>
<comment type="catalytic activity">
    <reaction evidence="1">
        <text>tRNA(Tyr) + L-tyrosine + ATP = L-tyrosyl-tRNA(Tyr) + AMP + diphosphate + H(+)</text>
        <dbReference type="Rhea" id="RHEA:10220"/>
        <dbReference type="Rhea" id="RHEA-COMP:9706"/>
        <dbReference type="Rhea" id="RHEA-COMP:9707"/>
        <dbReference type="ChEBI" id="CHEBI:15378"/>
        <dbReference type="ChEBI" id="CHEBI:30616"/>
        <dbReference type="ChEBI" id="CHEBI:33019"/>
        <dbReference type="ChEBI" id="CHEBI:58315"/>
        <dbReference type="ChEBI" id="CHEBI:78442"/>
        <dbReference type="ChEBI" id="CHEBI:78536"/>
        <dbReference type="ChEBI" id="CHEBI:456215"/>
        <dbReference type="EC" id="6.1.1.1"/>
    </reaction>
</comment>
<comment type="subunit">
    <text evidence="1">Homodimer.</text>
</comment>
<comment type="subcellular location">
    <subcellularLocation>
        <location evidence="1">Cytoplasm</location>
    </subcellularLocation>
</comment>
<comment type="similarity">
    <text evidence="1">Belongs to the class-I aminoacyl-tRNA synthetase family. TyrS type 1 subfamily.</text>
</comment>
<gene>
    <name evidence="1" type="primary">tyrS</name>
    <name type="ordered locus">SeAg_B1725</name>
</gene>
<protein>
    <recommendedName>
        <fullName evidence="1">Tyrosine--tRNA ligase</fullName>
        <ecNumber evidence="1">6.1.1.1</ecNumber>
    </recommendedName>
    <alternativeName>
        <fullName evidence="1">Tyrosyl-tRNA synthetase</fullName>
        <shortName evidence="1">TyrRS</shortName>
    </alternativeName>
</protein>
<name>SYY_SALA4</name>
<accession>B5F6J8</accession>